<proteinExistence type="inferred from homology"/>
<sequence length="780" mass="86789">MDYEALKDQWSDVEDRDGIRLSWNTFPSTRMEASRLVVPIAAVYTPLKEKPDSPLLQYEPVTCKAPCRAVLNPYANVDVRARIWICPFCLMRNPLPPHYKDITENAIPPELHPQSTTIEYQLARPAPAPPIFVYVVDTCQEEDSLKALKDTLILSLSLLPPNALVGLITYGTMAQVHELGYTECAKSYVFRGSKEYAAKQVQEMLGLLAAGPRPNMPQQPARPPVGPAARFLLPVQQAEFQITNVLEQLQRDPWPVANDKRPLRCTGVALSVAVGLLETSFQNAGGRIMVFTSGPATEGPGHVVGPELKEPMRSHHDIDRDNIKYYKKAVKFYDALAKRAANNGHVVDIFAGCLDQVGLLEMKNLANFTGGHMLLTDSFTSSQFKQSFVRVFDKDANDNLLMGFNASLEVLTTKELKVTGLIGHAVSLNKKSSSVGETECGIGNTCAWKMCGIDPSSSYGVYFEIANQGGPAAVQPGPQRGMMQFLTYYQHASGHYHLRVTTVARPLSGPTGDPTLAQSFDQEAAAVLMARIAVYKADVDDGPDVIRWVDRMLIRLCSRFADYRKDDPTSFRLEKNFTLYPQFMFHLRRSQFLQVFNNSPDETAFYRHVLNHEDVGDALVMIQPTLDSYSLEHEGSQPVLLDSASIQPTHILLLDTFFHILIFHGETIAEWRKAGYQDQEGYENLKALLEQPKEDARELIADRFPLPRFIVCDAGGSQARFLLSKLNPSTTHTTGGYGGGVTSQTIFTDDVSLQTFMDHLMKYAIPTCFTIVMNDANPPI</sequence>
<evidence type="ECO:0000250" key="1"/>
<evidence type="ECO:0000305" key="2"/>
<gene>
    <name type="primary">sec23</name>
    <name type="ORF">NFIA_021250</name>
</gene>
<feature type="chain" id="PRO_0000295466" description="Protein transport protein sec23">
    <location>
        <begin position="1"/>
        <end position="780"/>
    </location>
</feature>
<feature type="binding site" evidence="1">
    <location>
        <position position="63"/>
    </location>
    <ligand>
        <name>Zn(2+)</name>
        <dbReference type="ChEBI" id="CHEBI:29105"/>
    </ligand>
</feature>
<feature type="binding site" evidence="1">
    <location>
        <position position="67"/>
    </location>
    <ligand>
        <name>Zn(2+)</name>
        <dbReference type="ChEBI" id="CHEBI:29105"/>
    </ligand>
</feature>
<feature type="binding site" evidence="1">
    <location>
        <position position="86"/>
    </location>
    <ligand>
        <name>Zn(2+)</name>
        <dbReference type="ChEBI" id="CHEBI:29105"/>
    </ligand>
</feature>
<feature type="binding site" evidence="1">
    <location>
        <position position="89"/>
    </location>
    <ligand>
        <name>Zn(2+)</name>
        <dbReference type="ChEBI" id="CHEBI:29105"/>
    </ligand>
</feature>
<dbReference type="EMBL" id="DS027688">
    <property type="protein sequence ID" value="EAW23417.1"/>
    <property type="molecule type" value="Genomic_DNA"/>
</dbReference>
<dbReference type="RefSeq" id="XP_001265314.1">
    <property type="nucleotide sequence ID" value="XM_001265313.1"/>
</dbReference>
<dbReference type="SMR" id="A1D4S4"/>
<dbReference type="STRING" id="331117.A1D4S4"/>
<dbReference type="EnsemblFungi" id="EAW23417">
    <property type="protein sequence ID" value="EAW23417"/>
    <property type="gene ID" value="NFIA_021250"/>
</dbReference>
<dbReference type="GeneID" id="4591624"/>
<dbReference type="KEGG" id="nfi:NFIA_021250"/>
<dbReference type="VEuPathDB" id="FungiDB:NFIA_021250"/>
<dbReference type="eggNOG" id="KOG1986">
    <property type="taxonomic scope" value="Eukaryota"/>
</dbReference>
<dbReference type="HOGENOM" id="CLU_008658_3_0_1"/>
<dbReference type="OMA" id="FPPHYAE"/>
<dbReference type="OrthoDB" id="10256289at2759"/>
<dbReference type="Proteomes" id="UP000006702">
    <property type="component" value="Unassembled WGS sequence"/>
</dbReference>
<dbReference type="GO" id="GO:0030127">
    <property type="term" value="C:COPII vesicle coat"/>
    <property type="evidence" value="ECO:0007669"/>
    <property type="project" value="InterPro"/>
</dbReference>
<dbReference type="GO" id="GO:0070971">
    <property type="term" value="C:endoplasmic reticulum exit site"/>
    <property type="evidence" value="ECO:0007669"/>
    <property type="project" value="TreeGrafter"/>
</dbReference>
<dbReference type="GO" id="GO:0005789">
    <property type="term" value="C:endoplasmic reticulum membrane"/>
    <property type="evidence" value="ECO:0007669"/>
    <property type="project" value="UniProtKB-SubCell"/>
</dbReference>
<dbReference type="GO" id="GO:0000139">
    <property type="term" value="C:Golgi membrane"/>
    <property type="evidence" value="ECO:0007669"/>
    <property type="project" value="UniProtKB-SubCell"/>
</dbReference>
<dbReference type="GO" id="GO:0005096">
    <property type="term" value="F:GTPase activator activity"/>
    <property type="evidence" value="ECO:0007669"/>
    <property type="project" value="TreeGrafter"/>
</dbReference>
<dbReference type="GO" id="GO:0008270">
    <property type="term" value="F:zinc ion binding"/>
    <property type="evidence" value="ECO:0007669"/>
    <property type="project" value="InterPro"/>
</dbReference>
<dbReference type="GO" id="GO:0090110">
    <property type="term" value="P:COPII-coated vesicle cargo loading"/>
    <property type="evidence" value="ECO:0007669"/>
    <property type="project" value="TreeGrafter"/>
</dbReference>
<dbReference type="GO" id="GO:0006886">
    <property type="term" value="P:intracellular protein transport"/>
    <property type="evidence" value="ECO:0007669"/>
    <property type="project" value="InterPro"/>
</dbReference>
<dbReference type="CDD" id="cd01478">
    <property type="entry name" value="Sec23-like"/>
    <property type="match status" value="1"/>
</dbReference>
<dbReference type="CDD" id="cd11287">
    <property type="entry name" value="Sec23_C"/>
    <property type="match status" value="1"/>
</dbReference>
<dbReference type="FunFam" id="1.20.120.730:FF:000001">
    <property type="entry name" value="Protein transport protein SEC23"/>
    <property type="match status" value="1"/>
</dbReference>
<dbReference type="FunFam" id="2.30.30.380:FF:000001">
    <property type="entry name" value="Protein transport protein SEC23"/>
    <property type="match status" value="1"/>
</dbReference>
<dbReference type="FunFam" id="3.40.20.10:FF:000006">
    <property type="entry name" value="Protein transport protein SEC23"/>
    <property type="match status" value="1"/>
</dbReference>
<dbReference type="FunFam" id="3.40.50.410:FF:000008">
    <property type="entry name" value="Protein transport protein SEC23"/>
    <property type="match status" value="1"/>
</dbReference>
<dbReference type="Gene3D" id="2.60.40.1670">
    <property type="entry name" value="beta-sandwich domain of Sec23/24"/>
    <property type="match status" value="1"/>
</dbReference>
<dbReference type="Gene3D" id="1.20.120.730">
    <property type="entry name" value="Sec23/Sec24 helical domain"/>
    <property type="match status" value="1"/>
</dbReference>
<dbReference type="Gene3D" id="3.40.20.10">
    <property type="entry name" value="Severin"/>
    <property type="match status" value="1"/>
</dbReference>
<dbReference type="Gene3D" id="3.40.50.410">
    <property type="entry name" value="von Willebrand factor, type A domain"/>
    <property type="match status" value="1"/>
</dbReference>
<dbReference type="Gene3D" id="2.30.30.380">
    <property type="entry name" value="Zn-finger domain of Sec23/24"/>
    <property type="match status" value="1"/>
</dbReference>
<dbReference type="InterPro" id="IPR029006">
    <property type="entry name" value="ADF-H/Gelsolin-like_dom_sf"/>
</dbReference>
<dbReference type="InterPro" id="IPR007123">
    <property type="entry name" value="Gelsolin-like_dom"/>
</dbReference>
<dbReference type="InterPro" id="IPR036180">
    <property type="entry name" value="Gelsolin-like_dom_sf"/>
</dbReference>
<dbReference type="InterPro" id="IPR037364">
    <property type="entry name" value="Sec23"/>
</dbReference>
<dbReference type="InterPro" id="IPR006900">
    <property type="entry name" value="Sec23/24_helical_dom"/>
</dbReference>
<dbReference type="InterPro" id="IPR036175">
    <property type="entry name" value="Sec23/24_helical_dom_sf"/>
</dbReference>
<dbReference type="InterPro" id="IPR006896">
    <property type="entry name" value="Sec23/24_trunk_dom"/>
</dbReference>
<dbReference type="InterPro" id="IPR012990">
    <property type="entry name" value="Sec23_24_beta_S"/>
</dbReference>
<dbReference type="InterPro" id="IPR037550">
    <property type="entry name" value="Sec23_C"/>
</dbReference>
<dbReference type="InterPro" id="IPR036465">
    <property type="entry name" value="vWFA_dom_sf"/>
</dbReference>
<dbReference type="InterPro" id="IPR006895">
    <property type="entry name" value="Znf_Sec23_Sec24"/>
</dbReference>
<dbReference type="InterPro" id="IPR036174">
    <property type="entry name" value="Znf_Sec23_Sec24_sf"/>
</dbReference>
<dbReference type="PANTHER" id="PTHR11141">
    <property type="entry name" value="PROTEIN TRANSPORT PROTEIN SEC23"/>
    <property type="match status" value="1"/>
</dbReference>
<dbReference type="PANTHER" id="PTHR11141:SF0">
    <property type="entry name" value="PROTEIN TRANSPORT PROTEIN SEC23"/>
    <property type="match status" value="1"/>
</dbReference>
<dbReference type="Pfam" id="PF00626">
    <property type="entry name" value="Gelsolin"/>
    <property type="match status" value="1"/>
</dbReference>
<dbReference type="Pfam" id="PF08033">
    <property type="entry name" value="Sec23_BS"/>
    <property type="match status" value="1"/>
</dbReference>
<dbReference type="Pfam" id="PF04815">
    <property type="entry name" value="Sec23_helical"/>
    <property type="match status" value="1"/>
</dbReference>
<dbReference type="Pfam" id="PF04811">
    <property type="entry name" value="Sec23_trunk"/>
    <property type="match status" value="1"/>
</dbReference>
<dbReference type="Pfam" id="PF04810">
    <property type="entry name" value="zf-Sec23_Sec24"/>
    <property type="match status" value="1"/>
</dbReference>
<dbReference type="SUPFAM" id="SSF81995">
    <property type="entry name" value="beta-sandwich domain of Sec23/24"/>
    <property type="match status" value="1"/>
</dbReference>
<dbReference type="SUPFAM" id="SSF82754">
    <property type="entry name" value="C-terminal, gelsolin-like domain of Sec23/24"/>
    <property type="match status" value="1"/>
</dbReference>
<dbReference type="SUPFAM" id="SSF81811">
    <property type="entry name" value="Helical domain of Sec23/24"/>
    <property type="match status" value="1"/>
</dbReference>
<dbReference type="SUPFAM" id="SSF53300">
    <property type="entry name" value="vWA-like"/>
    <property type="match status" value="1"/>
</dbReference>
<dbReference type="SUPFAM" id="SSF82919">
    <property type="entry name" value="Zn-finger domain of Sec23/24"/>
    <property type="match status" value="1"/>
</dbReference>
<name>SEC23_NEOFI</name>
<keyword id="KW-0963">Cytoplasm</keyword>
<keyword id="KW-0968">Cytoplasmic vesicle</keyword>
<keyword id="KW-0256">Endoplasmic reticulum</keyword>
<keyword id="KW-0931">ER-Golgi transport</keyword>
<keyword id="KW-0333">Golgi apparatus</keyword>
<keyword id="KW-0472">Membrane</keyword>
<keyword id="KW-0479">Metal-binding</keyword>
<keyword id="KW-0653">Protein transport</keyword>
<keyword id="KW-1185">Reference proteome</keyword>
<keyword id="KW-0813">Transport</keyword>
<keyword id="KW-0862">Zinc</keyword>
<comment type="function">
    <text evidence="1">Component of the coat protein complex II (COPII) which promotes the formation of transport vesicles from the endoplasmic reticulum (ER). The coat has two main functions, the physical deformation of the endoplasmic reticulum membrane into vesicles and the selection of cargo molecules (By similarity).</text>
</comment>
<comment type="subunit">
    <text evidence="1">The COPII coat is composed of at least 5 proteins: the sec23/24 complex, the sec13/31 complex, and the protein sar1.</text>
</comment>
<comment type="subcellular location">
    <subcellularLocation>
        <location evidence="1">Cytoplasm</location>
    </subcellularLocation>
    <subcellularLocation>
        <location evidence="1">Cytoplasmic vesicle</location>
        <location evidence="1">COPII-coated vesicle membrane</location>
        <topology evidence="1">Peripheral membrane protein</topology>
        <orientation evidence="1">Cytoplasmic side</orientation>
    </subcellularLocation>
    <subcellularLocation>
        <location evidence="1">Endoplasmic reticulum membrane</location>
        <topology evidence="1">Peripheral membrane protein</topology>
        <orientation evidence="1">Cytoplasmic side</orientation>
    </subcellularLocation>
    <subcellularLocation>
        <location evidence="1">Golgi apparatus membrane</location>
        <topology evidence="1">Peripheral membrane protein</topology>
        <orientation evidence="1">Cytoplasmic side</orientation>
    </subcellularLocation>
</comment>
<comment type="similarity">
    <text evidence="2">Belongs to the SEC23/SEC24 family. SEC23 subfamily.</text>
</comment>
<accession>A1D4S4</accession>
<reference key="1">
    <citation type="journal article" date="2008" name="PLoS Genet.">
        <title>Genomic islands in the pathogenic filamentous fungus Aspergillus fumigatus.</title>
        <authorList>
            <person name="Fedorova N.D."/>
            <person name="Khaldi N."/>
            <person name="Joardar V.S."/>
            <person name="Maiti R."/>
            <person name="Amedeo P."/>
            <person name="Anderson M.J."/>
            <person name="Crabtree J."/>
            <person name="Silva J.C."/>
            <person name="Badger J.H."/>
            <person name="Albarraq A."/>
            <person name="Angiuoli S."/>
            <person name="Bussey H."/>
            <person name="Bowyer P."/>
            <person name="Cotty P.J."/>
            <person name="Dyer P.S."/>
            <person name="Egan A."/>
            <person name="Galens K."/>
            <person name="Fraser-Liggett C.M."/>
            <person name="Haas B.J."/>
            <person name="Inman J.M."/>
            <person name="Kent R."/>
            <person name="Lemieux S."/>
            <person name="Malavazi I."/>
            <person name="Orvis J."/>
            <person name="Roemer T."/>
            <person name="Ronning C.M."/>
            <person name="Sundaram J.P."/>
            <person name="Sutton G."/>
            <person name="Turner G."/>
            <person name="Venter J.C."/>
            <person name="White O.R."/>
            <person name="Whitty B.R."/>
            <person name="Youngman P."/>
            <person name="Wolfe K.H."/>
            <person name="Goldman G.H."/>
            <person name="Wortman J.R."/>
            <person name="Jiang B."/>
            <person name="Denning D.W."/>
            <person name="Nierman W.C."/>
        </authorList>
    </citation>
    <scope>NUCLEOTIDE SEQUENCE [LARGE SCALE GENOMIC DNA]</scope>
    <source>
        <strain>ATCC 1020 / DSM 3700 / CBS 544.65 / FGSC A1164 / JCM 1740 / NRRL 181 / WB 181</strain>
    </source>
</reference>
<organism>
    <name type="scientific">Neosartorya fischeri (strain ATCC 1020 / DSM 3700 / CBS 544.65 / FGSC A1164 / JCM 1740 / NRRL 181 / WB 181)</name>
    <name type="common">Aspergillus fischerianus</name>
    <dbReference type="NCBI Taxonomy" id="331117"/>
    <lineage>
        <taxon>Eukaryota</taxon>
        <taxon>Fungi</taxon>
        <taxon>Dikarya</taxon>
        <taxon>Ascomycota</taxon>
        <taxon>Pezizomycotina</taxon>
        <taxon>Eurotiomycetes</taxon>
        <taxon>Eurotiomycetidae</taxon>
        <taxon>Eurotiales</taxon>
        <taxon>Aspergillaceae</taxon>
        <taxon>Aspergillus</taxon>
        <taxon>Aspergillus subgen. Fumigati</taxon>
    </lineage>
</organism>
<protein>
    <recommendedName>
        <fullName>Protein transport protein sec23</fullName>
    </recommendedName>
</protein>